<comment type="function">
    <text evidence="1">May have a specific function in the mechanism or regulation of T-cell cytolytic activity.</text>
</comment>
<comment type="subcellular location">
    <subcellularLocation>
        <location evidence="2">Endoplasmic reticulum</location>
    </subcellularLocation>
</comment>
<comment type="similarity">
    <text evidence="4 5">Belongs to the peptidase C1 family.</text>
</comment>
<comment type="sequence caution" evidence="6">
    <conflict type="frameshift">
        <sequence resource="EMBL-CDS" id="CAB59816"/>
    </conflict>
</comment>
<sequence length="374" mass="41644">MAITVYLSCLLVLSMAGLAQGIKSSLRSQDPGPQPLELKQAFTLFQIQYNRSYSNPEEYARRLDIFAHNLAQAQQLEEEDLGTAEFGVTPFSDLTEEEFGRLYGHRRMDGEAPKVGREVGSEEWGESVPPTCDWRKLDGVISSVKKQESCSCCWAMAAAGNIEALWAIKYRQSVELSVQELLDCGRCGDGCRGGFVWDAFITVLNNSGLASEKDYPFQGQVKPHRCLAKKRTKVAWIQDFIMLPDNEQKIAWYLATQGPITVTINMKLLKLYKKGVIEATPTSCDPFLVDHSVLLVGFGKSESVADRRAGAAGAQPQSRRSIPFWILKNSWGTKWGXGGYFRLYRGNNTCGITKYPLTARVDQPAKKRPVSCPP</sequence>
<proteinExistence type="evidence at transcript level"/>
<gene>
    <name type="primary">CTSW</name>
</gene>
<organism>
    <name type="scientific">Felis catus</name>
    <name type="common">Cat</name>
    <name type="synonym">Felis silvestris catus</name>
    <dbReference type="NCBI Taxonomy" id="9685"/>
    <lineage>
        <taxon>Eukaryota</taxon>
        <taxon>Metazoa</taxon>
        <taxon>Chordata</taxon>
        <taxon>Craniata</taxon>
        <taxon>Vertebrata</taxon>
        <taxon>Euteleostomi</taxon>
        <taxon>Mammalia</taxon>
        <taxon>Eutheria</taxon>
        <taxon>Laurasiatheria</taxon>
        <taxon>Carnivora</taxon>
        <taxon>Feliformia</taxon>
        <taxon>Felidae</taxon>
        <taxon>Felinae</taxon>
        <taxon>Felis</taxon>
    </lineage>
</organism>
<feature type="signal peptide" evidence="3">
    <location>
        <begin position="1"/>
        <end position="21"/>
    </location>
</feature>
<feature type="propeptide" id="PRO_0000026325" evidence="3">
    <location>
        <begin position="22"/>
        <end position="127"/>
    </location>
</feature>
<feature type="chain" id="PRO_0000026326" description="Cathepsin W">
    <location>
        <begin position="128"/>
        <end position="374"/>
    </location>
</feature>
<feature type="active site" evidence="1">
    <location>
        <position position="153"/>
    </location>
</feature>
<feature type="active site" evidence="1">
    <location>
        <position position="291"/>
    </location>
</feature>
<feature type="active site" evidence="1">
    <location>
        <position position="329"/>
    </location>
</feature>
<feature type="glycosylation site" description="N-linked (GlcNAc...) asparagine" evidence="3">
    <location>
        <position position="205"/>
    </location>
</feature>
<feature type="glycosylation site" description="N-linked (GlcNAc...) asparagine" evidence="3">
    <location>
        <position position="347"/>
    </location>
</feature>
<feature type="disulfide bond" evidence="1">
    <location>
        <begin position="150"/>
        <end position="191"/>
    </location>
</feature>
<feature type="disulfide bond" evidence="1">
    <location>
        <begin position="184"/>
        <end position="226"/>
    </location>
</feature>
<keyword id="KW-1015">Disulfide bond</keyword>
<keyword id="KW-0256">Endoplasmic reticulum</keyword>
<keyword id="KW-0325">Glycoprotein</keyword>
<keyword id="KW-0378">Hydrolase</keyword>
<keyword id="KW-0645">Protease</keyword>
<keyword id="KW-1185">Reference proteome</keyword>
<keyword id="KW-0732">Signal</keyword>
<keyword id="KW-0788">Thiol protease</keyword>
<keyword id="KW-0865">Zymogen</keyword>
<name>CATW_FELCA</name>
<protein>
    <recommendedName>
        <fullName>Cathepsin W</fullName>
        <ecNumber>3.4.22.-</ecNumber>
    </recommendedName>
</protein>
<evidence type="ECO:0000250" key="1"/>
<evidence type="ECO:0000250" key="2">
    <source>
        <dbReference type="UniProtKB" id="P56202"/>
    </source>
</evidence>
<evidence type="ECO:0000255" key="3"/>
<evidence type="ECO:0000255" key="4">
    <source>
        <dbReference type="PROSITE-ProRule" id="PRU10089"/>
    </source>
</evidence>
<evidence type="ECO:0000255" key="5">
    <source>
        <dbReference type="PROSITE-ProRule" id="PRU10090"/>
    </source>
</evidence>
<evidence type="ECO:0000305" key="6"/>
<reference key="1">
    <citation type="submission" date="1998-10" db="EMBL/GenBank/DDBJ databases">
        <title>FIV infection induces apoptosis and alters host gene expression.</title>
        <authorList>
            <person name="Kovacs E.M."/>
            <person name="Robinson W.F."/>
        </authorList>
    </citation>
    <scope>NUCLEOTIDE SEQUENCE [MRNA]</scope>
    <source>
        <tissue>Lymphocyte</tissue>
    </source>
</reference>
<accession>Q9TST1</accession>
<dbReference type="EC" id="3.4.22.-"/>
<dbReference type="EMBL" id="AJ012326">
    <property type="protein sequence ID" value="CAB59816.1"/>
    <property type="status" value="ALT_FRAME"/>
    <property type="molecule type" value="mRNA"/>
</dbReference>
<dbReference type="RefSeq" id="NP_001116343.1">
    <property type="nucleotide sequence ID" value="NM_001122871.1"/>
</dbReference>
<dbReference type="STRING" id="9685.ENSFCAP00000026383"/>
<dbReference type="MEROPS" id="C01.037"/>
<dbReference type="GlyCosmos" id="Q9TST1">
    <property type="glycosylation" value="2 sites, No reported glycans"/>
</dbReference>
<dbReference type="PaxDb" id="9685-ENSFCAP00000005174"/>
<dbReference type="GeneID" id="100144390"/>
<dbReference type="KEGG" id="fca:100144390"/>
<dbReference type="CTD" id="1521"/>
<dbReference type="eggNOG" id="KOG1542">
    <property type="taxonomic scope" value="Eukaryota"/>
</dbReference>
<dbReference type="InParanoid" id="Q9TST1"/>
<dbReference type="OrthoDB" id="387093at2759"/>
<dbReference type="TreeFam" id="TF337736"/>
<dbReference type="Proteomes" id="UP000011712">
    <property type="component" value="Unplaced"/>
</dbReference>
<dbReference type="GO" id="GO:0005783">
    <property type="term" value="C:endoplasmic reticulum"/>
    <property type="evidence" value="ECO:0007669"/>
    <property type="project" value="UniProtKB-SubCell"/>
</dbReference>
<dbReference type="GO" id="GO:0005615">
    <property type="term" value="C:extracellular space"/>
    <property type="evidence" value="ECO:0000318"/>
    <property type="project" value="GO_Central"/>
</dbReference>
<dbReference type="GO" id="GO:0005764">
    <property type="term" value="C:lysosome"/>
    <property type="evidence" value="ECO:0000318"/>
    <property type="project" value="GO_Central"/>
</dbReference>
<dbReference type="GO" id="GO:0004197">
    <property type="term" value="F:cysteine-type endopeptidase activity"/>
    <property type="evidence" value="ECO:0000318"/>
    <property type="project" value="GO_Central"/>
</dbReference>
<dbReference type="GO" id="GO:0051603">
    <property type="term" value="P:proteolysis involved in protein catabolic process"/>
    <property type="evidence" value="ECO:0000318"/>
    <property type="project" value="GO_Central"/>
</dbReference>
<dbReference type="CDD" id="cd02248">
    <property type="entry name" value="Peptidase_C1A"/>
    <property type="match status" value="1"/>
</dbReference>
<dbReference type="FunFam" id="1.10.287.2250:FF:000001">
    <property type="entry name" value="Cathepsin F"/>
    <property type="match status" value="1"/>
</dbReference>
<dbReference type="FunFam" id="3.90.70.10:FF:000100">
    <property type="entry name" value="Cathepsin W"/>
    <property type="match status" value="1"/>
</dbReference>
<dbReference type="Gene3D" id="3.90.70.10">
    <property type="entry name" value="Cysteine proteinases"/>
    <property type="match status" value="1"/>
</dbReference>
<dbReference type="InterPro" id="IPR038765">
    <property type="entry name" value="Papain-like_cys_pep_sf"/>
</dbReference>
<dbReference type="InterPro" id="IPR025661">
    <property type="entry name" value="Pept_asp_AS"/>
</dbReference>
<dbReference type="InterPro" id="IPR025660">
    <property type="entry name" value="Pept_his_AS"/>
</dbReference>
<dbReference type="InterPro" id="IPR013128">
    <property type="entry name" value="Peptidase_C1A"/>
</dbReference>
<dbReference type="InterPro" id="IPR000668">
    <property type="entry name" value="Peptidase_C1A_C"/>
</dbReference>
<dbReference type="InterPro" id="IPR039417">
    <property type="entry name" value="Peptidase_C1A_papain-like"/>
</dbReference>
<dbReference type="InterPro" id="IPR013201">
    <property type="entry name" value="Prot_inhib_I29"/>
</dbReference>
<dbReference type="PANTHER" id="PTHR12411">
    <property type="entry name" value="CYSTEINE PROTEASE FAMILY C1-RELATED"/>
    <property type="match status" value="1"/>
</dbReference>
<dbReference type="Pfam" id="PF08246">
    <property type="entry name" value="Inhibitor_I29"/>
    <property type="match status" value="1"/>
</dbReference>
<dbReference type="Pfam" id="PF00112">
    <property type="entry name" value="Peptidase_C1"/>
    <property type="match status" value="1"/>
</dbReference>
<dbReference type="PRINTS" id="PR00705">
    <property type="entry name" value="PAPAIN"/>
</dbReference>
<dbReference type="SMART" id="SM00848">
    <property type="entry name" value="Inhibitor_I29"/>
    <property type="match status" value="1"/>
</dbReference>
<dbReference type="SMART" id="SM00645">
    <property type="entry name" value="Pept_C1"/>
    <property type="match status" value="1"/>
</dbReference>
<dbReference type="SUPFAM" id="SSF54001">
    <property type="entry name" value="Cysteine proteinases"/>
    <property type="match status" value="1"/>
</dbReference>
<dbReference type="PROSITE" id="PS00640">
    <property type="entry name" value="THIOL_PROTEASE_ASN"/>
    <property type="match status" value="1"/>
</dbReference>
<dbReference type="PROSITE" id="PS00639">
    <property type="entry name" value="THIOL_PROTEASE_HIS"/>
    <property type="match status" value="1"/>
</dbReference>